<accession>Q216E1</accession>
<name>MRAY_RHOPB</name>
<feature type="chain" id="PRO_1000003042" description="Phospho-N-acetylmuramoyl-pentapeptide-transferase">
    <location>
        <begin position="1"/>
        <end position="361"/>
    </location>
</feature>
<feature type="transmembrane region" description="Helical" evidence="1">
    <location>
        <begin position="25"/>
        <end position="45"/>
    </location>
</feature>
<feature type="transmembrane region" description="Helical" evidence="1">
    <location>
        <begin position="71"/>
        <end position="91"/>
    </location>
</feature>
<feature type="transmembrane region" description="Helical" evidence="1">
    <location>
        <begin position="94"/>
        <end position="114"/>
    </location>
</feature>
<feature type="transmembrane region" description="Helical" evidence="1">
    <location>
        <begin position="133"/>
        <end position="153"/>
    </location>
</feature>
<feature type="transmembrane region" description="Helical" evidence="1">
    <location>
        <begin position="169"/>
        <end position="189"/>
    </location>
</feature>
<feature type="transmembrane region" description="Helical" evidence="1">
    <location>
        <begin position="200"/>
        <end position="220"/>
    </location>
</feature>
<feature type="transmembrane region" description="Helical" evidence="1">
    <location>
        <begin position="240"/>
        <end position="260"/>
    </location>
</feature>
<feature type="transmembrane region" description="Helical" evidence="1">
    <location>
        <begin position="264"/>
        <end position="284"/>
    </location>
</feature>
<feature type="transmembrane region" description="Helical" evidence="1">
    <location>
        <begin position="289"/>
        <end position="309"/>
    </location>
</feature>
<feature type="transmembrane region" description="Helical" evidence="1">
    <location>
        <begin position="338"/>
        <end position="358"/>
    </location>
</feature>
<reference key="1">
    <citation type="submission" date="2006-03" db="EMBL/GenBank/DDBJ databases">
        <title>Complete sequence of Rhodopseudomonas palustris BisB18.</title>
        <authorList>
            <consortium name="US DOE Joint Genome Institute"/>
            <person name="Copeland A."/>
            <person name="Lucas S."/>
            <person name="Lapidus A."/>
            <person name="Barry K."/>
            <person name="Detter J.C."/>
            <person name="Glavina del Rio T."/>
            <person name="Hammon N."/>
            <person name="Israni S."/>
            <person name="Dalin E."/>
            <person name="Tice H."/>
            <person name="Pitluck S."/>
            <person name="Chain P."/>
            <person name="Malfatti S."/>
            <person name="Shin M."/>
            <person name="Vergez L."/>
            <person name="Schmutz J."/>
            <person name="Larimer F."/>
            <person name="Land M."/>
            <person name="Hauser L."/>
            <person name="Pelletier D.A."/>
            <person name="Kyrpides N."/>
            <person name="Anderson I."/>
            <person name="Oda Y."/>
            <person name="Harwood C.S."/>
            <person name="Richardson P."/>
        </authorList>
    </citation>
    <scope>NUCLEOTIDE SEQUENCE [LARGE SCALE GENOMIC DNA]</scope>
    <source>
        <strain>BisB18</strain>
    </source>
</reference>
<keyword id="KW-0131">Cell cycle</keyword>
<keyword id="KW-0132">Cell division</keyword>
<keyword id="KW-0997">Cell inner membrane</keyword>
<keyword id="KW-1003">Cell membrane</keyword>
<keyword id="KW-0133">Cell shape</keyword>
<keyword id="KW-0961">Cell wall biogenesis/degradation</keyword>
<keyword id="KW-0460">Magnesium</keyword>
<keyword id="KW-0472">Membrane</keyword>
<keyword id="KW-0479">Metal-binding</keyword>
<keyword id="KW-0573">Peptidoglycan synthesis</keyword>
<keyword id="KW-0808">Transferase</keyword>
<keyword id="KW-0812">Transmembrane</keyword>
<keyword id="KW-1133">Transmembrane helix</keyword>
<organism>
    <name type="scientific">Rhodopseudomonas palustris (strain BisB18)</name>
    <dbReference type="NCBI Taxonomy" id="316056"/>
    <lineage>
        <taxon>Bacteria</taxon>
        <taxon>Pseudomonadati</taxon>
        <taxon>Pseudomonadota</taxon>
        <taxon>Alphaproteobacteria</taxon>
        <taxon>Hyphomicrobiales</taxon>
        <taxon>Nitrobacteraceae</taxon>
        <taxon>Rhodopseudomonas</taxon>
    </lineage>
</organism>
<evidence type="ECO:0000255" key="1">
    <source>
        <dbReference type="HAMAP-Rule" id="MF_00038"/>
    </source>
</evidence>
<comment type="function">
    <text evidence="1">Catalyzes the initial step of the lipid cycle reactions in the biosynthesis of the cell wall peptidoglycan: transfers peptidoglycan precursor phospho-MurNAc-pentapeptide from UDP-MurNAc-pentapeptide onto the lipid carrier undecaprenyl phosphate, yielding undecaprenyl-pyrophosphoryl-MurNAc-pentapeptide, known as lipid I.</text>
</comment>
<comment type="catalytic activity">
    <reaction evidence="1">
        <text>UDP-N-acetyl-alpha-D-muramoyl-L-alanyl-gamma-D-glutamyl-meso-2,6-diaminopimeloyl-D-alanyl-D-alanine + di-trans,octa-cis-undecaprenyl phosphate = di-trans,octa-cis-undecaprenyl diphospho-N-acetyl-alpha-D-muramoyl-L-alanyl-D-glutamyl-meso-2,6-diaminopimeloyl-D-alanyl-D-alanine + UMP</text>
        <dbReference type="Rhea" id="RHEA:28386"/>
        <dbReference type="ChEBI" id="CHEBI:57865"/>
        <dbReference type="ChEBI" id="CHEBI:60392"/>
        <dbReference type="ChEBI" id="CHEBI:61386"/>
        <dbReference type="ChEBI" id="CHEBI:61387"/>
        <dbReference type="EC" id="2.7.8.13"/>
    </reaction>
</comment>
<comment type="cofactor">
    <cofactor evidence="1">
        <name>Mg(2+)</name>
        <dbReference type="ChEBI" id="CHEBI:18420"/>
    </cofactor>
</comment>
<comment type="pathway">
    <text evidence="1">Cell wall biogenesis; peptidoglycan biosynthesis.</text>
</comment>
<comment type="subcellular location">
    <subcellularLocation>
        <location evidence="1">Cell inner membrane</location>
        <topology evidence="1">Multi-pass membrane protein</topology>
    </subcellularLocation>
</comment>
<comment type="similarity">
    <text evidence="1">Belongs to the glycosyltransferase 4 family. MraY subfamily.</text>
</comment>
<proteinExistence type="inferred from homology"/>
<gene>
    <name evidence="1" type="primary">mraY</name>
    <name type="ordered locus">RPC_2191</name>
</gene>
<protein>
    <recommendedName>
        <fullName evidence="1">Phospho-N-acetylmuramoyl-pentapeptide-transferase</fullName>
        <ecNumber evidence="1">2.7.8.13</ecNumber>
    </recommendedName>
    <alternativeName>
        <fullName evidence="1">UDP-MurNAc-pentapeptide phosphotransferase</fullName>
    </alternativeName>
</protein>
<dbReference type="EC" id="2.7.8.13" evidence="1"/>
<dbReference type="EMBL" id="CP000301">
    <property type="protein sequence ID" value="ABD87745.1"/>
    <property type="molecule type" value="Genomic_DNA"/>
</dbReference>
<dbReference type="SMR" id="Q216E1"/>
<dbReference type="STRING" id="316056.RPC_2191"/>
<dbReference type="KEGG" id="rpc:RPC_2191"/>
<dbReference type="eggNOG" id="COG0472">
    <property type="taxonomic scope" value="Bacteria"/>
</dbReference>
<dbReference type="HOGENOM" id="CLU_023982_0_0_5"/>
<dbReference type="OrthoDB" id="9805475at2"/>
<dbReference type="UniPathway" id="UPA00219"/>
<dbReference type="GO" id="GO:0005886">
    <property type="term" value="C:plasma membrane"/>
    <property type="evidence" value="ECO:0007669"/>
    <property type="project" value="UniProtKB-SubCell"/>
</dbReference>
<dbReference type="GO" id="GO:0046872">
    <property type="term" value="F:metal ion binding"/>
    <property type="evidence" value="ECO:0007669"/>
    <property type="project" value="UniProtKB-KW"/>
</dbReference>
<dbReference type="GO" id="GO:0008963">
    <property type="term" value="F:phospho-N-acetylmuramoyl-pentapeptide-transferase activity"/>
    <property type="evidence" value="ECO:0007669"/>
    <property type="project" value="UniProtKB-UniRule"/>
</dbReference>
<dbReference type="GO" id="GO:0051992">
    <property type="term" value="F:UDP-N-acetylmuramoyl-L-alanyl-D-glutamyl-meso-2,6-diaminopimelyl-D-alanyl-D-alanine:undecaprenyl-phosphate transferase activity"/>
    <property type="evidence" value="ECO:0007669"/>
    <property type="project" value="RHEA"/>
</dbReference>
<dbReference type="GO" id="GO:0051301">
    <property type="term" value="P:cell division"/>
    <property type="evidence" value="ECO:0007669"/>
    <property type="project" value="UniProtKB-KW"/>
</dbReference>
<dbReference type="GO" id="GO:0071555">
    <property type="term" value="P:cell wall organization"/>
    <property type="evidence" value="ECO:0007669"/>
    <property type="project" value="UniProtKB-KW"/>
</dbReference>
<dbReference type="GO" id="GO:0009252">
    <property type="term" value="P:peptidoglycan biosynthetic process"/>
    <property type="evidence" value="ECO:0007669"/>
    <property type="project" value="UniProtKB-UniRule"/>
</dbReference>
<dbReference type="GO" id="GO:0008360">
    <property type="term" value="P:regulation of cell shape"/>
    <property type="evidence" value="ECO:0007669"/>
    <property type="project" value="UniProtKB-KW"/>
</dbReference>
<dbReference type="CDD" id="cd06852">
    <property type="entry name" value="GT_MraY"/>
    <property type="match status" value="1"/>
</dbReference>
<dbReference type="HAMAP" id="MF_00038">
    <property type="entry name" value="MraY"/>
    <property type="match status" value="1"/>
</dbReference>
<dbReference type="InterPro" id="IPR000715">
    <property type="entry name" value="Glycosyl_transferase_4"/>
</dbReference>
<dbReference type="InterPro" id="IPR003524">
    <property type="entry name" value="PNAcMuramoyl-5peptid_Trfase"/>
</dbReference>
<dbReference type="InterPro" id="IPR018480">
    <property type="entry name" value="PNAcMuramoyl-5peptid_Trfase_CS"/>
</dbReference>
<dbReference type="NCBIfam" id="TIGR00445">
    <property type="entry name" value="mraY"/>
    <property type="match status" value="1"/>
</dbReference>
<dbReference type="PANTHER" id="PTHR22926">
    <property type="entry name" value="PHOSPHO-N-ACETYLMURAMOYL-PENTAPEPTIDE-TRANSFERASE"/>
    <property type="match status" value="1"/>
</dbReference>
<dbReference type="PANTHER" id="PTHR22926:SF5">
    <property type="entry name" value="PHOSPHO-N-ACETYLMURAMOYL-PENTAPEPTIDE-TRANSFERASE HOMOLOG"/>
    <property type="match status" value="1"/>
</dbReference>
<dbReference type="Pfam" id="PF00953">
    <property type="entry name" value="Glycos_transf_4"/>
    <property type="match status" value="1"/>
</dbReference>
<dbReference type="PROSITE" id="PS01347">
    <property type="entry name" value="MRAY_1"/>
    <property type="match status" value="1"/>
</dbReference>
<dbReference type="PROSITE" id="PS01348">
    <property type="entry name" value="MRAY_2"/>
    <property type="match status" value="1"/>
</dbReference>
<sequence length="361" mass="38598">MLYWLIDFASTIPAFNVFRYITFRTGGAMVTGALFVFLCGPWIIDNLRLRQGKGQPIRSDGPQSHLSKKGTPTMGGLMVLSGLVVGTVLWANPLNPYVWIVLAVTLGFGFVGFYDDYLKVTKQSSQNGFAGRWRLLIEAVIAAAACYALVRLGRDPLSSSLVIPFFKDVAINLGWFFVGFGAFIVVGAGNAVNLTDGLDGLAIVPVMIAAASFGLISYLAGNAVFADYLQINYVAGTGELSVLCGALLGAGLGFLWFNAPPASIFMGDTGSLALGGMLGSIAVAVKHEIVLAVIGGLFVLEAVSVIVQVASFKLTGKRVFKMAPIHHHFEQKGWTEPQIVIRFWIIAVMLALAGLSTLKLR</sequence>